<dbReference type="EC" id="2.7.1.48" evidence="1"/>
<dbReference type="EMBL" id="AE014299">
    <property type="protein sequence ID" value="AAN55646.1"/>
    <property type="molecule type" value="Genomic_DNA"/>
</dbReference>
<dbReference type="RefSeq" id="NP_718202.1">
    <property type="nucleotide sequence ID" value="NC_004347.2"/>
</dbReference>
<dbReference type="RefSeq" id="WP_011072566.1">
    <property type="nucleotide sequence ID" value="NZ_CP053946.1"/>
</dbReference>
<dbReference type="SMR" id="Q8EDX4"/>
<dbReference type="STRING" id="211586.SO_2617"/>
<dbReference type="PaxDb" id="211586-SO_2617"/>
<dbReference type="GeneID" id="94727753"/>
<dbReference type="KEGG" id="son:SO_2617"/>
<dbReference type="PATRIC" id="fig|211586.12.peg.2520"/>
<dbReference type="eggNOG" id="COG0572">
    <property type="taxonomic scope" value="Bacteria"/>
</dbReference>
<dbReference type="HOGENOM" id="CLU_021278_1_2_6"/>
<dbReference type="OrthoDB" id="9777642at2"/>
<dbReference type="PhylomeDB" id="Q8EDX4"/>
<dbReference type="BioCyc" id="SONE211586:G1GMP-2403-MONOMER"/>
<dbReference type="UniPathway" id="UPA00574">
    <property type="reaction ID" value="UER00637"/>
</dbReference>
<dbReference type="UniPathway" id="UPA00579">
    <property type="reaction ID" value="UER00640"/>
</dbReference>
<dbReference type="Proteomes" id="UP000008186">
    <property type="component" value="Chromosome"/>
</dbReference>
<dbReference type="GO" id="GO:0005737">
    <property type="term" value="C:cytoplasm"/>
    <property type="evidence" value="ECO:0000318"/>
    <property type="project" value="GO_Central"/>
</dbReference>
<dbReference type="GO" id="GO:0005524">
    <property type="term" value="F:ATP binding"/>
    <property type="evidence" value="ECO:0007669"/>
    <property type="project" value="UniProtKB-UniRule"/>
</dbReference>
<dbReference type="GO" id="GO:0043771">
    <property type="term" value="F:cytidine kinase activity"/>
    <property type="evidence" value="ECO:0000318"/>
    <property type="project" value="GO_Central"/>
</dbReference>
<dbReference type="GO" id="GO:0004849">
    <property type="term" value="F:uridine kinase activity"/>
    <property type="evidence" value="ECO:0000318"/>
    <property type="project" value="GO_Central"/>
</dbReference>
<dbReference type="GO" id="GO:0044211">
    <property type="term" value="P:CTP salvage"/>
    <property type="evidence" value="ECO:0007669"/>
    <property type="project" value="UniProtKB-UniRule"/>
</dbReference>
<dbReference type="GO" id="GO:0044206">
    <property type="term" value="P:UMP salvage"/>
    <property type="evidence" value="ECO:0007669"/>
    <property type="project" value="UniProtKB-UniRule"/>
</dbReference>
<dbReference type="CDD" id="cd02023">
    <property type="entry name" value="UMPK"/>
    <property type="match status" value="1"/>
</dbReference>
<dbReference type="Gene3D" id="3.40.50.300">
    <property type="entry name" value="P-loop containing nucleotide triphosphate hydrolases"/>
    <property type="match status" value="1"/>
</dbReference>
<dbReference type="HAMAP" id="MF_00551">
    <property type="entry name" value="Uridine_kinase"/>
    <property type="match status" value="1"/>
</dbReference>
<dbReference type="InterPro" id="IPR027417">
    <property type="entry name" value="P-loop_NTPase"/>
</dbReference>
<dbReference type="InterPro" id="IPR006083">
    <property type="entry name" value="PRK/URK"/>
</dbReference>
<dbReference type="InterPro" id="IPR026008">
    <property type="entry name" value="Uridine_kinase"/>
</dbReference>
<dbReference type="InterPro" id="IPR000764">
    <property type="entry name" value="Uridine_kinase-like"/>
</dbReference>
<dbReference type="NCBIfam" id="NF004018">
    <property type="entry name" value="PRK05480.1"/>
    <property type="match status" value="1"/>
</dbReference>
<dbReference type="NCBIfam" id="TIGR00235">
    <property type="entry name" value="udk"/>
    <property type="match status" value="1"/>
</dbReference>
<dbReference type="PANTHER" id="PTHR10285">
    <property type="entry name" value="URIDINE KINASE"/>
    <property type="match status" value="1"/>
</dbReference>
<dbReference type="Pfam" id="PF00485">
    <property type="entry name" value="PRK"/>
    <property type="match status" value="1"/>
</dbReference>
<dbReference type="PRINTS" id="PR00988">
    <property type="entry name" value="URIDINKINASE"/>
</dbReference>
<dbReference type="SUPFAM" id="SSF52540">
    <property type="entry name" value="P-loop containing nucleoside triphosphate hydrolases"/>
    <property type="match status" value="1"/>
</dbReference>
<evidence type="ECO:0000255" key="1">
    <source>
        <dbReference type="HAMAP-Rule" id="MF_00551"/>
    </source>
</evidence>
<accession>Q8EDX4</accession>
<name>URK_SHEON</name>
<proteinExistence type="inferred from homology"/>
<gene>
    <name evidence="1" type="primary">udk</name>
    <name type="ordered locus">SO_2617</name>
</gene>
<comment type="catalytic activity">
    <reaction evidence="1">
        <text>uridine + ATP = UMP + ADP + H(+)</text>
        <dbReference type="Rhea" id="RHEA:16825"/>
        <dbReference type="ChEBI" id="CHEBI:15378"/>
        <dbReference type="ChEBI" id="CHEBI:16704"/>
        <dbReference type="ChEBI" id="CHEBI:30616"/>
        <dbReference type="ChEBI" id="CHEBI:57865"/>
        <dbReference type="ChEBI" id="CHEBI:456216"/>
        <dbReference type="EC" id="2.7.1.48"/>
    </reaction>
</comment>
<comment type="catalytic activity">
    <reaction evidence="1">
        <text>cytidine + ATP = CMP + ADP + H(+)</text>
        <dbReference type="Rhea" id="RHEA:24674"/>
        <dbReference type="ChEBI" id="CHEBI:15378"/>
        <dbReference type="ChEBI" id="CHEBI:17562"/>
        <dbReference type="ChEBI" id="CHEBI:30616"/>
        <dbReference type="ChEBI" id="CHEBI:60377"/>
        <dbReference type="ChEBI" id="CHEBI:456216"/>
        <dbReference type="EC" id="2.7.1.48"/>
    </reaction>
</comment>
<comment type="pathway">
    <text evidence="1">Pyrimidine metabolism; CTP biosynthesis via salvage pathway; CTP from cytidine: step 1/3.</text>
</comment>
<comment type="pathway">
    <text evidence="1">Pyrimidine metabolism; UMP biosynthesis via salvage pathway; UMP from uridine: step 1/1.</text>
</comment>
<comment type="subcellular location">
    <subcellularLocation>
        <location evidence="1">Cytoplasm</location>
    </subcellularLocation>
</comment>
<comment type="similarity">
    <text evidence="1">Belongs to the uridine kinase family.</text>
</comment>
<organism>
    <name type="scientific">Shewanella oneidensis (strain ATCC 700550 / JCM 31522 / CIP 106686 / LMG 19005 / NCIMB 14063 / MR-1)</name>
    <dbReference type="NCBI Taxonomy" id="211586"/>
    <lineage>
        <taxon>Bacteria</taxon>
        <taxon>Pseudomonadati</taxon>
        <taxon>Pseudomonadota</taxon>
        <taxon>Gammaproteobacteria</taxon>
        <taxon>Alteromonadales</taxon>
        <taxon>Shewanellaceae</taxon>
        <taxon>Shewanella</taxon>
    </lineage>
</organism>
<keyword id="KW-0067">ATP-binding</keyword>
<keyword id="KW-0963">Cytoplasm</keyword>
<keyword id="KW-0418">Kinase</keyword>
<keyword id="KW-0547">Nucleotide-binding</keyword>
<keyword id="KW-1185">Reference proteome</keyword>
<keyword id="KW-0808">Transferase</keyword>
<feature type="chain" id="PRO_0000164486" description="Uridine kinase">
    <location>
        <begin position="1"/>
        <end position="212"/>
    </location>
</feature>
<feature type="binding site" evidence="1">
    <location>
        <begin position="13"/>
        <end position="20"/>
    </location>
    <ligand>
        <name>ATP</name>
        <dbReference type="ChEBI" id="CHEBI:30616"/>
    </ligand>
</feature>
<protein>
    <recommendedName>
        <fullName evidence="1">Uridine kinase</fullName>
        <ecNumber evidence="1">2.7.1.48</ecNumber>
    </recommendedName>
    <alternativeName>
        <fullName evidence="1">Cytidine monophosphokinase</fullName>
    </alternativeName>
    <alternativeName>
        <fullName evidence="1">Uridine monophosphokinase</fullName>
    </alternativeName>
</protein>
<reference key="1">
    <citation type="journal article" date="2002" name="Nat. Biotechnol.">
        <title>Genome sequence of the dissimilatory metal ion-reducing bacterium Shewanella oneidensis.</title>
        <authorList>
            <person name="Heidelberg J.F."/>
            <person name="Paulsen I.T."/>
            <person name="Nelson K.E."/>
            <person name="Gaidos E.J."/>
            <person name="Nelson W.C."/>
            <person name="Read T.D."/>
            <person name="Eisen J.A."/>
            <person name="Seshadri R."/>
            <person name="Ward N.L."/>
            <person name="Methe B.A."/>
            <person name="Clayton R.A."/>
            <person name="Meyer T."/>
            <person name="Tsapin A."/>
            <person name="Scott J."/>
            <person name="Beanan M.J."/>
            <person name="Brinkac L.M."/>
            <person name="Daugherty S.C."/>
            <person name="DeBoy R.T."/>
            <person name="Dodson R.J."/>
            <person name="Durkin A.S."/>
            <person name="Haft D.H."/>
            <person name="Kolonay J.F."/>
            <person name="Madupu R."/>
            <person name="Peterson J.D."/>
            <person name="Umayam L.A."/>
            <person name="White O."/>
            <person name="Wolf A.M."/>
            <person name="Vamathevan J.J."/>
            <person name="Weidman J.F."/>
            <person name="Impraim M."/>
            <person name="Lee K."/>
            <person name="Berry K.J."/>
            <person name="Lee C."/>
            <person name="Mueller J."/>
            <person name="Khouri H.M."/>
            <person name="Gill J."/>
            <person name="Utterback T.R."/>
            <person name="McDonald L.A."/>
            <person name="Feldblyum T.V."/>
            <person name="Smith H.O."/>
            <person name="Venter J.C."/>
            <person name="Nealson K.H."/>
            <person name="Fraser C.M."/>
        </authorList>
    </citation>
    <scope>NUCLEOTIDE SEQUENCE [LARGE SCALE GENOMIC DNA]</scope>
    <source>
        <strain>ATCC 700550 / JCM 31522 / CIP 106686 / LMG 19005 / NCIMB 14063 / MR-1</strain>
    </source>
</reference>
<sequence>MNSQQCVIIAIAGASASGKSLIAKTIFDELRRDLGTDQIGVINEDAYYRDQSHLSMDERVLTNYDHPKALDHQLLCTHLQLLKSGEAVDIPCYSYTEHTRMAETVKMTPKKVIILEGILLLTDPKLRELMDASVFMDTPLDICFLRRLTRDVAERGRTMESVISQYKKTVRPMFLQFIEPSKQYADIIVPRGGKNRIATDILKTRIQHLLAK</sequence>